<dbReference type="EMBL" id="CU234118">
    <property type="protein sequence ID" value="CAL74325.1"/>
    <property type="molecule type" value="Genomic_DNA"/>
</dbReference>
<dbReference type="SMR" id="A4YK99"/>
<dbReference type="STRING" id="114615.BRADO0377"/>
<dbReference type="KEGG" id="bra:BRADO0377"/>
<dbReference type="eggNOG" id="COG0806">
    <property type="taxonomic scope" value="Bacteria"/>
</dbReference>
<dbReference type="HOGENOM" id="CLU_077636_0_1_5"/>
<dbReference type="Proteomes" id="UP000001994">
    <property type="component" value="Chromosome"/>
</dbReference>
<dbReference type="GO" id="GO:0005737">
    <property type="term" value="C:cytoplasm"/>
    <property type="evidence" value="ECO:0007669"/>
    <property type="project" value="UniProtKB-SubCell"/>
</dbReference>
<dbReference type="GO" id="GO:0005840">
    <property type="term" value="C:ribosome"/>
    <property type="evidence" value="ECO:0007669"/>
    <property type="project" value="InterPro"/>
</dbReference>
<dbReference type="GO" id="GO:0043022">
    <property type="term" value="F:ribosome binding"/>
    <property type="evidence" value="ECO:0007669"/>
    <property type="project" value="InterPro"/>
</dbReference>
<dbReference type="GO" id="GO:0042274">
    <property type="term" value="P:ribosomal small subunit biogenesis"/>
    <property type="evidence" value="ECO:0007669"/>
    <property type="project" value="UniProtKB-UniRule"/>
</dbReference>
<dbReference type="GO" id="GO:0006364">
    <property type="term" value="P:rRNA processing"/>
    <property type="evidence" value="ECO:0007669"/>
    <property type="project" value="UniProtKB-UniRule"/>
</dbReference>
<dbReference type="Gene3D" id="2.30.30.240">
    <property type="entry name" value="PRC-barrel domain"/>
    <property type="match status" value="1"/>
</dbReference>
<dbReference type="Gene3D" id="2.40.30.60">
    <property type="entry name" value="RimM"/>
    <property type="match status" value="1"/>
</dbReference>
<dbReference type="HAMAP" id="MF_00014">
    <property type="entry name" value="Ribosome_mat_RimM"/>
    <property type="match status" value="1"/>
</dbReference>
<dbReference type="InterPro" id="IPR011033">
    <property type="entry name" value="PRC_barrel-like_sf"/>
</dbReference>
<dbReference type="InterPro" id="IPR056792">
    <property type="entry name" value="PRC_RimM"/>
</dbReference>
<dbReference type="InterPro" id="IPR011961">
    <property type="entry name" value="RimM"/>
</dbReference>
<dbReference type="InterPro" id="IPR002676">
    <property type="entry name" value="RimM_N"/>
</dbReference>
<dbReference type="InterPro" id="IPR036976">
    <property type="entry name" value="RimM_N_sf"/>
</dbReference>
<dbReference type="InterPro" id="IPR009000">
    <property type="entry name" value="Transl_B-barrel_sf"/>
</dbReference>
<dbReference type="NCBIfam" id="TIGR02273">
    <property type="entry name" value="16S_RimM"/>
    <property type="match status" value="1"/>
</dbReference>
<dbReference type="PANTHER" id="PTHR33692">
    <property type="entry name" value="RIBOSOME MATURATION FACTOR RIMM"/>
    <property type="match status" value="1"/>
</dbReference>
<dbReference type="PANTHER" id="PTHR33692:SF1">
    <property type="entry name" value="RIBOSOME MATURATION FACTOR RIMM"/>
    <property type="match status" value="1"/>
</dbReference>
<dbReference type="Pfam" id="PF24986">
    <property type="entry name" value="PRC_RimM"/>
    <property type="match status" value="1"/>
</dbReference>
<dbReference type="Pfam" id="PF01782">
    <property type="entry name" value="RimM"/>
    <property type="match status" value="1"/>
</dbReference>
<dbReference type="SUPFAM" id="SSF50346">
    <property type="entry name" value="PRC-barrel domain"/>
    <property type="match status" value="1"/>
</dbReference>
<dbReference type="SUPFAM" id="SSF50447">
    <property type="entry name" value="Translation proteins"/>
    <property type="match status" value="1"/>
</dbReference>
<evidence type="ECO:0000255" key="1">
    <source>
        <dbReference type="HAMAP-Rule" id="MF_00014"/>
    </source>
</evidence>
<evidence type="ECO:0000256" key="2">
    <source>
        <dbReference type="SAM" id="MobiDB-lite"/>
    </source>
</evidence>
<organism>
    <name type="scientific">Bradyrhizobium sp. (strain ORS 278)</name>
    <dbReference type="NCBI Taxonomy" id="114615"/>
    <lineage>
        <taxon>Bacteria</taxon>
        <taxon>Pseudomonadati</taxon>
        <taxon>Pseudomonadota</taxon>
        <taxon>Alphaproteobacteria</taxon>
        <taxon>Hyphomicrobiales</taxon>
        <taxon>Nitrobacteraceae</taxon>
        <taxon>Bradyrhizobium</taxon>
    </lineage>
</organism>
<accession>A4YK99</accession>
<name>RIMM_BRASO</name>
<protein>
    <recommendedName>
        <fullName evidence="1">Ribosome maturation factor RimM</fullName>
    </recommendedName>
</protein>
<gene>
    <name evidence="1" type="primary">rimM</name>
    <name type="ordered locus">BRADO0377</name>
</gene>
<keyword id="KW-0143">Chaperone</keyword>
<keyword id="KW-0963">Cytoplasm</keyword>
<keyword id="KW-1185">Reference proteome</keyword>
<keyword id="KW-0690">Ribosome biogenesis</keyword>
<keyword id="KW-0698">rRNA processing</keyword>
<proteinExistence type="inferred from homology"/>
<comment type="function">
    <text evidence="1">An accessory protein needed during the final step in the assembly of 30S ribosomal subunit, possibly for assembly of the head region. Essential for efficient processing of 16S rRNA. May be needed both before and after RbfA during the maturation of 16S rRNA. It has affinity for free ribosomal 30S subunits but not for 70S ribosomes.</text>
</comment>
<comment type="subunit">
    <text evidence="1">Binds ribosomal protein uS19.</text>
</comment>
<comment type="subcellular location">
    <subcellularLocation>
        <location evidence="1">Cytoplasm</location>
    </subcellularLocation>
</comment>
<comment type="domain">
    <text evidence="1">The PRC barrel domain binds ribosomal protein uS19.</text>
</comment>
<comment type="similarity">
    <text evidence="1">Belongs to the RimM family.</text>
</comment>
<reference key="1">
    <citation type="journal article" date="2007" name="Science">
        <title>Legumes symbioses: absence of nod genes in photosynthetic bradyrhizobia.</title>
        <authorList>
            <person name="Giraud E."/>
            <person name="Moulin L."/>
            <person name="Vallenet D."/>
            <person name="Barbe V."/>
            <person name="Cytryn E."/>
            <person name="Avarre J.-C."/>
            <person name="Jaubert M."/>
            <person name="Simon D."/>
            <person name="Cartieaux F."/>
            <person name="Prin Y."/>
            <person name="Bena G."/>
            <person name="Hannibal L."/>
            <person name="Fardoux J."/>
            <person name="Kojadinovic M."/>
            <person name="Vuillet L."/>
            <person name="Lajus A."/>
            <person name="Cruveiller S."/>
            <person name="Rouy Z."/>
            <person name="Mangenot S."/>
            <person name="Segurens B."/>
            <person name="Dossat C."/>
            <person name="Franck W.L."/>
            <person name="Chang W.-S."/>
            <person name="Saunders E."/>
            <person name="Bruce D."/>
            <person name="Richardson P."/>
            <person name="Normand P."/>
            <person name="Dreyfus B."/>
            <person name="Pignol D."/>
            <person name="Stacey G."/>
            <person name="Emerich D."/>
            <person name="Vermeglio A."/>
            <person name="Medigue C."/>
            <person name="Sadowsky M."/>
        </authorList>
    </citation>
    <scope>NUCLEOTIDE SEQUENCE [LARGE SCALE GENOMIC DNA]</scope>
    <source>
        <strain>ORS 278</strain>
    </source>
</reference>
<feature type="chain" id="PRO_1000001155" description="Ribosome maturation factor RimM">
    <location>
        <begin position="1"/>
        <end position="199"/>
    </location>
</feature>
<feature type="domain" description="PRC barrel" evidence="1">
    <location>
        <begin position="93"/>
        <end position="169"/>
    </location>
</feature>
<feature type="region of interest" description="Disordered" evidence="2">
    <location>
        <begin position="164"/>
        <end position="199"/>
    </location>
</feature>
<sequence>MMSKLICVARIGAAHGVRGEVRLWTFTEDPLAVLHYGPLTTKDGSRSFEVTKAREAKDHLVASFKGITDRNAAERLNGVELYVPRDRLPETDDDEYYHADLIGLAAETTAGAPLGRVLAIHNFGAGDIIEIAPPSGSTLMLPFTNAVVPTVDLAGGRVIIELPDEIDGEDRASADESASAEDDAAAPNSARHPRESGDP</sequence>